<keyword id="KW-0053">Apoptosis</keyword>
<keyword id="KW-0378">Hydrolase</keyword>
<keyword id="KW-0645">Protease</keyword>
<keyword id="KW-1185">Reference proteome</keyword>
<keyword id="KW-0788">Thiol protease</keyword>
<keyword id="KW-0865">Zymogen</keyword>
<feature type="propeptide" id="PRO_0000333636" evidence="2">
    <location>
        <begin position="1"/>
        <end status="unknown"/>
    </location>
</feature>
<feature type="chain" id="PRO_0000333637" description="Metacaspase-1">
    <location>
        <begin status="unknown"/>
        <end position="419"/>
    </location>
</feature>
<feature type="region of interest" description="Disordered" evidence="3">
    <location>
        <begin position="1"/>
        <end position="109"/>
    </location>
</feature>
<feature type="compositionally biased region" description="Pro residues" evidence="3">
    <location>
        <begin position="18"/>
        <end position="37"/>
    </location>
</feature>
<feature type="compositionally biased region" description="Pro residues" evidence="3">
    <location>
        <begin position="45"/>
        <end position="61"/>
    </location>
</feature>
<feature type="compositionally biased region" description="Polar residues" evidence="3">
    <location>
        <begin position="83"/>
        <end position="95"/>
    </location>
</feature>
<feature type="active site" evidence="1">
    <location>
        <position position="210"/>
    </location>
</feature>
<feature type="active site" evidence="1">
    <location>
        <position position="266"/>
    </location>
</feature>
<evidence type="ECO:0000250" key="1"/>
<evidence type="ECO:0000255" key="2"/>
<evidence type="ECO:0000256" key="3">
    <source>
        <dbReference type="SAM" id="MobiDB-lite"/>
    </source>
</evidence>
<evidence type="ECO:0000305" key="4"/>
<reference key="1">
    <citation type="journal article" date="2011" name="PLoS Genet.">
        <title>Genomic analysis of the necrotrophic fungal pathogens Sclerotinia sclerotiorum and Botrytis cinerea.</title>
        <authorList>
            <person name="Amselem J."/>
            <person name="Cuomo C.A."/>
            <person name="van Kan J.A.L."/>
            <person name="Viaud M."/>
            <person name="Benito E.P."/>
            <person name="Couloux A."/>
            <person name="Coutinho P.M."/>
            <person name="de Vries R.P."/>
            <person name="Dyer P.S."/>
            <person name="Fillinger S."/>
            <person name="Fournier E."/>
            <person name="Gout L."/>
            <person name="Hahn M."/>
            <person name="Kohn L."/>
            <person name="Lapalu N."/>
            <person name="Plummer K.M."/>
            <person name="Pradier J.-M."/>
            <person name="Quevillon E."/>
            <person name="Sharon A."/>
            <person name="Simon A."/>
            <person name="ten Have A."/>
            <person name="Tudzynski B."/>
            <person name="Tudzynski P."/>
            <person name="Wincker P."/>
            <person name="Andrew M."/>
            <person name="Anthouard V."/>
            <person name="Beever R.E."/>
            <person name="Beffa R."/>
            <person name="Benoit I."/>
            <person name="Bouzid O."/>
            <person name="Brault B."/>
            <person name="Chen Z."/>
            <person name="Choquer M."/>
            <person name="Collemare J."/>
            <person name="Cotton P."/>
            <person name="Danchin E.G."/>
            <person name="Da Silva C."/>
            <person name="Gautier A."/>
            <person name="Giraud C."/>
            <person name="Giraud T."/>
            <person name="Gonzalez C."/>
            <person name="Grossetete S."/>
            <person name="Gueldener U."/>
            <person name="Henrissat B."/>
            <person name="Howlett B.J."/>
            <person name="Kodira C."/>
            <person name="Kretschmer M."/>
            <person name="Lappartient A."/>
            <person name="Leroch M."/>
            <person name="Levis C."/>
            <person name="Mauceli E."/>
            <person name="Neuveglise C."/>
            <person name="Oeser B."/>
            <person name="Pearson M."/>
            <person name="Poulain J."/>
            <person name="Poussereau N."/>
            <person name="Quesneville H."/>
            <person name="Rascle C."/>
            <person name="Schumacher J."/>
            <person name="Segurens B."/>
            <person name="Sexton A."/>
            <person name="Silva E."/>
            <person name="Sirven C."/>
            <person name="Soanes D.M."/>
            <person name="Talbot N.J."/>
            <person name="Templeton M."/>
            <person name="Yandava C."/>
            <person name="Yarden O."/>
            <person name="Zeng Q."/>
            <person name="Rollins J.A."/>
            <person name="Lebrun M.-H."/>
            <person name="Dickman M."/>
        </authorList>
    </citation>
    <scope>NUCLEOTIDE SEQUENCE [LARGE SCALE GENOMIC DNA]</scope>
    <source>
        <strain>B05.10</strain>
    </source>
</reference>
<reference key="2">
    <citation type="journal article" date="2012" name="Eukaryot. Cell">
        <title>Genome update of Botrytis cinerea strains B05.10 and T4.</title>
        <authorList>
            <person name="Staats M."/>
            <person name="van Kan J.A.L."/>
        </authorList>
    </citation>
    <scope>NUCLEOTIDE SEQUENCE [LARGE SCALE GENOMIC DNA]</scope>
    <scope>GENOME REANNOTATION</scope>
    <source>
        <strain>B05.10</strain>
    </source>
</reference>
<reference key="3">
    <citation type="journal article" date="2017" name="Mol. Plant Pathol.">
        <title>A gapless genome sequence of the fungus Botrytis cinerea.</title>
        <authorList>
            <person name="van Kan J.A.L."/>
            <person name="Stassen J.H.M."/>
            <person name="Mosbach A."/>
            <person name="van der Lee T.A.J."/>
            <person name="Faino L."/>
            <person name="Farmer A.D."/>
            <person name="Papasotiriou D.G."/>
            <person name="Zhou S."/>
            <person name="Seidl M.F."/>
            <person name="Cottam E."/>
            <person name="Edel D."/>
            <person name="Hahn M."/>
            <person name="Schwartz D.C."/>
            <person name="Dietrich R.A."/>
            <person name="Widdison S."/>
            <person name="Scalliet G."/>
        </authorList>
    </citation>
    <scope>NUCLEOTIDE SEQUENCE [LARGE SCALE GENOMIC DNA]</scope>
    <scope>GENOME REANNOTATION</scope>
    <source>
        <strain>B05.10</strain>
    </source>
</reference>
<name>MCA1_BOTFB</name>
<organism>
    <name type="scientific">Botryotinia fuckeliana (strain B05.10)</name>
    <name type="common">Noble rot fungus</name>
    <name type="synonym">Botrytis cinerea</name>
    <dbReference type="NCBI Taxonomy" id="332648"/>
    <lineage>
        <taxon>Eukaryota</taxon>
        <taxon>Fungi</taxon>
        <taxon>Dikarya</taxon>
        <taxon>Ascomycota</taxon>
        <taxon>Pezizomycotina</taxon>
        <taxon>Leotiomycetes</taxon>
        <taxon>Helotiales</taxon>
        <taxon>Sclerotiniaceae</taxon>
        <taxon>Botrytis</taxon>
    </lineage>
</organism>
<dbReference type="EC" id="3.4.22.-"/>
<dbReference type="EMBL" id="CP009806">
    <property type="protein sequence ID" value="ATZ47364.1"/>
    <property type="molecule type" value="Genomic_DNA"/>
</dbReference>
<dbReference type="SMR" id="A6SDT7"/>
<dbReference type="MEROPS" id="C14.035"/>
<dbReference type="EnsemblFungi" id="Bcin02g06530.1">
    <property type="protein sequence ID" value="Bcin02p06530.1"/>
    <property type="gene ID" value="Bcin02g06530"/>
</dbReference>
<dbReference type="VEuPathDB" id="FungiDB:Bcin02g06530"/>
<dbReference type="OrthoDB" id="3223806at2759"/>
<dbReference type="Proteomes" id="UP000001798">
    <property type="component" value="Chromosome bcin02"/>
</dbReference>
<dbReference type="GO" id="GO:0005737">
    <property type="term" value="C:cytoplasm"/>
    <property type="evidence" value="ECO:0007669"/>
    <property type="project" value="TreeGrafter"/>
</dbReference>
<dbReference type="GO" id="GO:0004197">
    <property type="term" value="F:cysteine-type endopeptidase activity"/>
    <property type="evidence" value="ECO:0007669"/>
    <property type="project" value="InterPro"/>
</dbReference>
<dbReference type="GO" id="GO:0006915">
    <property type="term" value="P:apoptotic process"/>
    <property type="evidence" value="ECO:0007669"/>
    <property type="project" value="UniProtKB-KW"/>
</dbReference>
<dbReference type="GO" id="GO:0006508">
    <property type="term" value="P:proteolysis"/>
    <property type="evidence" value="ECO:0007669"/>
    <property type="project" value="UniProtKB-KW"/>
</dbReference>
<dbReference type="Gene3D" id="3.40.50.12660">
    <property type="match status" value="1"/>
</dbReference>
<dbReference type="InterPro" id="IPR029030">
    <property type="entry name" value="Caspase-like_dom_sf"/>
</dbReference>
<dbReference type="InterPro" id="IPR050452">
    <property type="entry name" value="Metacaspase"/>
</dbReference>
<dbReference type="InterPro" id="IPR011600">
    <property type="entry name" value="Pept_C14_caspase"/>
</dbReference>
<dbReference type="PANTHER" id="PTHR48104:SF30">
    <property type="entry name" value="METACASPASE-1"/>
    <property type="match status" value="1"/>
</dbReference>
<dbReference type="PANTHER" id="PTHR48104">
    <property type="entry name" value="METACASPASE-4"/>
    <property type="match status" value="1"/>
</dbReference>
<dbReference type="Pfam" id="PF00656">
    <property type="entry name" value="Peptidase_C14"/>
    <property type="match status" value="1"/>
</dbReference>
<dbReference type="SUPFAM" id="SSF52129">
    <property type="entry name" value="Caspase-like"/>
    <property type="match status" value="1"/>
</dbReference>
<protein>
    <recommendedName>
        <fullName>Metacaspase-1</fullName>
        <ecNumber>3.4.22.-</ecNumber>
    </recommendedName>
</protein>
<comment type="function">
    <text evidence="1">Involved in cell death (apoptosis).</text>
</comment>
<comment type="similarity">
    <text evidence="4">Belongs to the peptidase C14B family.</text>
</comment>
<accession>A6SDT7</accession>
<accession>A0A384JAN5</accession>
<proteinExistence type="inferred from homology"/>
<sequence length="419" mass="45818">MSGYPGYNNGGYGAPNQQYPPQPYYPPQPAYGAPPPQGGGYGYHQPPPPQQPYGYSQPPPQQYGGYNGVPPNAPQYGRPGMPSVNSNAYTNGNQNAPPPPPQGMHAFGQGAPQGYAFQYSNCTGKRKALLIGINYFGQRGQLRGCINDVKNMSSYLHENFGYQRDDMVLLTDDQQNPMSQPTKQNILRAMHWLVKDARPNDSLFFHYSGHGGQTKDLDGDEEDGYDEVIYPVDFRQVGHIVDDEMHRIMVQPLQPGVRLTAIFDSCHSGTALDLPYVYSTQGVLKEPNLAKEAGQGLLGVISSYSQGDMSGVASNLMGFFKKATTGDDAYNKTLATKTSPADVIMWSGSKDDQTSADATIAAQATGAMSWAFITAMKKNPQQSYVQLLNSIRDELATKYTQKPQLSCSHPLNTNLLFVM</sequence>
<gene>
    <name type="primary">casA</name>
    <name type="ORF">BC1G_11354</name>
    <name type="ORF">BCIN_02g06530</name>
</gene>